<proteinExistence type="evidence at protein level"/>
<comment type="function">
    <text evidence="1">Catalyzes the NADPH-dependent reduction of glutamyl-tRNA(Glu) to glutamate 1-semialdehyde (GSA).</text>
</comment>
<comment type="catalytic activity">
    <reaction evidence="1">
        <text>(S)-4-amino-5-oxopentanoate + tRNA(Glu) + NADP(+) = L-glutamyl-tRNA(Glu) + NADPH + H(+)</text>
        <dbReference type="Rhea" id="RHEA:12344"/>
        <dbReference type="Rhea" id="RHEA-COMP:9663"/>
        <dbReference type="Rhea" id="RHEA-COMP:9680"/>
        <dbReference type="ChEBI" id="CHEBI:15378"/>
        <dbReference type="ChEBI" id="CHEBI:57501"/>
        <dbReference type="ChEBI" id="CHEBI:57783"/>
        <dbReference type="ChEBI" id="CHEBI:58349"/>
        <dbReference type="ChEBI" id="CHEBI:78442"/>
        <dbReference type="ChEBI" id="CHEBI:78520"/>
        <dbReference type="EC" id="1.2.1.70"/>
    </reaction>
</comment>
<comment type="pathway">
    <text evidence="1">Porphyrin-containing compound metabolism; protoporphyrin-IX biosynthesis; 5-aminolevulinate from L-glutamyl-tRNA(Glu): step 1/2.</text>
</comment>
<comment type="subunit">
    <text evidence="1">Homodimer.</text>
</comment>
<comment type="domain">
    <text evidence="1">Possesses an unusual extended V-shaped dimeric structure with each monomer consisting of three distinct domains arranged along a curved 'spinal' alpha-helix. The N-terminal catalytic domain specifically recognizes the glutamate moiety of the substrate. The second domain is the NADPH-binding domain, and the third C-terminal domain is responsible for dimerization.</text>
</comment>
<comment type="miscellaneous">
    <text evidence="1">During catalysis, the active site Cys acts as a nucleophile attacking the alpha-carbonyl group of tRNA-bound glutamate with the formation of a thioester intermediate between enzyme and glutamate, and the concomitant release of tRNA(Glu). The thioester intermediate is finally reduced by direct hydride transfer from NADPH, to form the product GSA.</text>
</comment>
<comment type="similarity">
    <text evidence="1">Belongs to the glutamyl-tRNA reductase family.</text>
</comment>
<gene>
    <name evidence="1 3" type="primary">hemA</name>
    <name type="ordered locus">BSU28170</name>
</gene>
<name>HEM1_BACSU</name>
<protein>
    <recommendedName>
        <fullName evidence="1">Glutamyl-tRNA reductase</fullName>
        <shortName evidence="1">GluTR</shortName>
        <ecNumber evidence="1">1.2.1.70</ecNumber>
    </recommendedName>
</protein>
<evidence type="ECO:0000255" key="1">
    <source>
        <dbReference type="HAMAP-Rule" id="MF_00087"/>
    </source>
</evidence>
<evidence type="ECO:0000269" key="2">
    <source>
    </source>
</evidence>
<evidence type="ECO:0000303" key="3">
    <source>
    </source>
</evidence>
<feature type="chain" id="PRO_0000113996" description="Glutamyl-tRNA reductase">
    <location>
        <begin position="1"/>
        <end position="455"/>
    </location>
</feature>
<feature type="active site" description="Nucleophile" evidence="1">
    <location>
        <position position="50"/>
    </location>
</feature>
<feature type="binding site" evidence="1">
    <location>
        <begin position="49"/>
        <end position="52"/>
    </location>
    <ligand>
        <name>substrate</name>
    </ligand>
</feature>
<feature type="binding site" evidence="1">
    <location>
        <position position="109"/>
    </location>
    <ligand>
        <name>substrate</name>
    </ligand>
</feature>
<feature type="binding site" evidence="1">
    <location>
        <begin position="114"/>
        <end position="116"/>
    </location>
    <ligand>
        <name>substrate</name>
    </ligand>
</feature>
<feature type="binding site" evidence="1">
    <location>
        <position position="120"/>
    </location>
    <ligand>
        <name>substrate</name>
    </ligand>
</feature>
<feature type="binding site" evidence="1">
    <location>
        <begin position="189"/>
        <end position="194"/>
    </location>
    <ligand>
        <name>NADP(+)</name>
        <dbReference type="ChEBI" id="CHEBI:58349"/>
    </ligand>
</feature>
<feature type="site" description="Important for activity" evidence="1">
    <location>
        <position position="99"/>
    </location>
</feature>
<feature type="mutagenesis site" description="Loss of activity." evidence="2">
    <original>C</original>
    <variation>Y</variation>
    <location>
        <position position="105"/>
    </location>
</feature>
<organism>
    <name type="scientific">Bacillus subtilis (strain 168)</name>
    <dbReference type="NCBI Taxonomy" id="224308"/>
    <lineage>
        <taxon>Bacteria</taxon>
        <taxon>Bacillati</taxon>
        <taxon>Bacillota</taxon>
        <taxon>Bacilli</taxon>
        <taxon>Bacillales</taxon>
        <taxon>Bacillaceae</taxon>
        <taxon>Bacillus</taxon>
    </lineage>
</organism>
<reference key="1">
    <citation type="journal article" date="1990" name="J. Bacteriol.">
        <title>Cloning and characterization of the hemA region of the Bacillus subtilis chromosome.</title>
        <authorList>
            <person name="Petricek M."/>
            <person name="Rutberg L."/>
            <person name="Schroeder I."/>
            <person name="Hederstedt L."/>
        </authorList>
    </citation>
    <scope>NUCLEOTIDE SEQUENCE [GENOMIC DNA]</scope>
    <scope>MUTAGENESIS OF CYS-105</scope>
    <source>
        <strain>168</strain>
    </source>
</reference>
<reference key="2">
    <citation type="journal article" date="1996" name="Microbiology">
        <title>The dnaB-pheA (256 degrees-240 degrees) region of the Bacillus subtilis chromosome containing genes responsible for stress responses, the utilization of plant cell walls and primary metabolism.</title>
        <authorList>
            <person name="Wipat A."/>
            <person name="Carter N."/>
            <person name="Brignell C.S."/>
            <person name="Guy J.B."/>
            <person name="Piper K."/>
            <person name="Sanders J."/>
            <person name="Emmerson P.T."/>
            <person name="Harwood C.R."/>
        </authorList>
    </citation>
    <scope>NUCLEOTIDE SEQUENCE [GENOMIC DNA]</scope>
    <source>
        <strain>168</strain>
    </source>
</reference>
<reference key="3">
    <citation type="journal article" date="1997" name="Nature">
        <title>The complete genome sequence of the Gram-positive bacterium Bacillus subtilis.</title>
        <authorList>
            <person name="Kunst F."/>
            <person name="Ogasawara N."/>
            <person name="Moszer I."/>
            <person name="Albertini A.M."/>
            <person name="Alloni G."/>
            <person name="Azevedo V."/>
            <person name="Bertero M.G."/>
            <person name="Bessieres P."/>
            <person name="Bolotin A."/>
            <person name="Borchert S."/>
            <person name="Borriss R."/>
            <person name="Boursier L."/>
            <person name="Brans A."/>
            <person name="Braun M."/>
            <person name="Brignell S.C."/>
            <person name="Bron S."/>
            <person name="Brouillet S."/>
            <person name="Bruschi C.V."/>
            <person name="Caldwell B."/>
            <person name="Capuano V."/>
            <person name="Carter N.M."/>
            <person name="Choi S.-K."/>
            <person name="Codani J.-J."/>
            <person name="Connerton I.F."/>
            <person name="Cummings N.J."/>
            <person name="Daniel R.A."/>
            <person name="Denizot F."/>
            <person name="Devine K.M."/>
            <person name="Duesterhoeft A."/>
            <person name="Ehrlich S.D."/>
            <person name="Emmerson P.T."/>
            <person name="Entian K.-D."/>
            <person name="Errington J."/>
            <person name="Fabret C."/>
            <person name="Ferrari E."/>
            <person name="Foulger D."/>
            <person name="Fritz C."/>
            <person name="Fujita M."/>
            <person name="Fujita Y."/>
            <person name="Fuma S."/>
            <person name="Galizzi A."/>
            <person name="Galleron N."/>
            <person name="Ghim S.-Y."/>
            <person name="Glaser P."/>
            <person name="Goffeau A."/>
            <person name="Golightly E.J."/>
            <person name="Grandi G."/>
            <person name="Guiseppi G."/>
            <person name="Guy B.J."/>
            <person name="Haga K."/>
            <person name="Haiech J."/>
            <person name="Harwood C.R."/>
            <person name="Henaut A."/>
            <person name="Hilbert H."/>
            <person name="Holsappel S."/>
            <person name="Hosono S."/>
            <person name="Hullo M.-F."/>
            <person name="Itaya M."/>
            <person name="Jones L.-M."/>
            <person name="Joris B."/>
            <person name="Karamata D."/>
            <person name="Kasahara Y."/>
            <person name="Klaerr-Blanchard M."/>
            <person name="Klein C."/>
            <person name="Kobayashi Y."/>
            <person name="Koetter P."/>
            <person name="Koningstein G."/>
            <person name="Krogh S."/>
            <person name="Kumano M."/>
            <person name="Kurita K."/>
            <person name="Lapidus A."/>
            <person name="Lardinois S."/>
            <person name="Lauber J."/>
            <person name="Lazarevic V."/>
            <person name="Lee S.-M."/>
            <person name="Levine A."/>
            <person name="Liu H."/>
            <person name="Masuda S."/>
            <person name="Mauel C."/>
            <person name="Medigue C."/>
            <person name="Medina N."/>
            <person name="Mellado R.P."/>
            <person name="Mizuno M."/>
            <person name="Moestl D."/>
            <person name="Nakai S."/>
            <person name="Noback M."/>
            <person name="Noone D."/>
            <person name="O'Reilly M."/>
            <person name="Ogawa K."/>
            <person name="Ogiwara A."/>
            <person name="Oudega B."/>
            <person name="Park S.-H."/>
            <person name="Parro V."/>
            <person name="Pohl T.M."/>
            <person name="Portetelle D."/>
            <person name="Porwollik S."/>
            <person name="Prescott A.M."/>
            <person name="Presecan E."/>
            <person name="Pujic P."/>
            <person name="Purnelle B."/>
            <person name="Rapoport G."/>
            <person name="Rey M."/>
            <person name="Reynolds S."/>
            <person name="Rieger M."/>
            <person name="Rivolta C."/>
            <person name="Rocha E."/>
            <person name="Roche B."/>
            <person name="Rose M."/>
            <person name="Sadaie Y."/>
            <person name="Sato T."/>
            <person name="Scanlan E."/>
            <person name="Schleich S."/>
            <person name="Schroeter R."/>
            <person name="Scoffone F."/>
            <person name="Sekiguchi J."/>
            <person name="Sekowska A."/>
            <person name="Seror S.J."/>
            <person name="Serror P."/>
            <person name="Shin B.-S."/>
            <person name="Soldo B."/>
            <person name="Sorokin A."/>
            <person name="Tacconi E."/>
            <person name="Takagi T."/>
            <person name="Takahashi H."/>
            <person name="Takemaru K."/>
            <person name="Takeuchi M."/>
            <person name="Tamakoshi A."/>
            <person name="Tanaka T."/>
            <person name="Terpstra P."/>
            <person name="Tognoni A."/>
            <person name="Tosato V."/>
            <person name="Uchiyama S."/>
            <person name="Vandenbol M."/>
            <person name="Vannier F."/>
            <person name="Vassarotti A."/>
            <person name="Viari A."/>
            <person name="Wambutt R."/>
            <person name="Wedler E."/>
            <person name="Wedler H."/>
            <person name="Weitzenegger T."/>
            <person name="Winters P."/>
            <person name="Wipat A."/>
            <person name="Yamamoto H."/>
            <person name="Yamane K."/>
            <person name="Yasumoto K."/>
            <person name="Yata K."/>
            <person name="Yoshida K."/>
            <person name="Yoshikawa H.-F."/>
            <person name="Zumstein E."/>
            <person name="Yoshikawa H."/>
            <person name="Danchin A."/>
        </authorList>
    </citation>
    <scope>NUCLEOTIDE SEQUENCE [LARGE SCALE GENOMIC DNA]</scope>
    <source>
        <strain>168</strain>
    </source>
</reference>
<dbReference type="EC" id="1.2.1.70" evidence="1"/>
<dbReference type="EMBL" id="M57676">
    <property type="protein sequence ID" value="AAA22510.1"/>
    <property type="molecule type" value="Genomic_DNA"/>
</dbReference>
<dbReference type="EMBL" id="Z75208">
    <property type="protein sequence ID" value="CAA99543.1"/>
    <property type="molecule type" value="Genomic_DNA"/>
</dbReference>
<dbReference type="EMBL" id="AL009126">
    <property type="protein sequence ID" value="CAB14777.1"/>
    <property type="molecule type" value="Genomic_DNA"/>
</dbReference>
<dbReference type="PIR" id="A35252">
    <property type="entry name" value="A35252"/>
</dbReference>
<dbReference type="RefSeq" id="NP_390695.1">
    <property type="nucleotide sequence ID" value="NC_000964.3"/>
</dbReference>
<dbReference type="RefSeq" id="WP_004399038.1">
    <property type="nucleotide sequence ID" value="NZ_OZ025638.1"/>
</dbReference>
<dbReference type="SMR" id="P16618"/>
<dbReference type="FunCoup" id="P16618">
    <property type="interactions" value="500"/>
</dbReference>
<dbReference type="STRING" id="224308.BSU28170"/>
<dbReference type="PaxDb" id="224308-BSU28170"/>
<dbReference type="DNASU" id="937443"/>
<dbReference type="EnsemblBacteria" id="CAB14777">
    <property type="protein sequence ID" value="CAB14777"/>
    <property type="gene ID" value="BSU_28170"/>
</dbReference>
<dbReference type="GeneID" id="937443"/>
<dbReference type="KEGG" id="bsu:BSU28170"/>
<dbReference type="PATRIC" id="fig|224308.179.peg.3060"/>
<dbReference type="eggNOG" id="COG0373">
    <property type="taxonomic scope" value="Bacteria"/>
</dbReference>
<dbReference type="InParanoid" id="P16618"/>
<dbReference type="OrthoDB" id="110209at2"/>
<dbReference type="PhylomeDB" id="P16618"/>
<dbReference type="BioCyc" id="BSUB:BSU28170-MONOMER"/>
<dbReference type="UniPathway" id="UPA00251">
    <property type="reaction ID" value="UER00316"/>
</dbReference>
<dbReference type="Proteomes" id="UP000001570">
    <property type="component" value="Chromosome"/>
</dbReference>
<dbReference type="GO" id="GO:0008883">
    <property type="term" value="F:glutamyl-tRNA reductase activity"/>
    <property type="evidence" value="ECO:0007669"/>
    <property type="project" value="UniProtKB-UniRule"/>
</dbReference>
<dbReference type="GO" id="GO:0050661">
    <property type="term" value="F:NADP binding"/>
    <property type="evidence" value="ECO:0007669"/>
    <property type="project" value="InterPro"/>
</dbReference>
<dbReference type="GO" id="GO:0006782">
    <property type="term" value="P:protoporphyrinogen IX biosynthetic process"/>
    <property type="evidence" value="ECO:0007669"/>
    <property type="project" value="UniProtKB-UniRule"/>
</dbReference>
<dbReference type="CDD" id="cd05213">
    <property type="entry name" value="NAD_bind_Glutamyl_tRNA_reduct"/>
    <property type="match status" value="1"/>
</dbReference>
<dbReference type="FunFam" id="3.30.460.30:FF:000001">
    <property type="entry name" value="Glutamyl-tRNA reductase"/>
    <property type="match status" value="1"/>
</dbReference>
<dbReference type="FunFam" id="3.40.50.720:FF:000031">
    <property type="entry name" value="Glutamyl-tRNA reductase"/>
    <property type="match status" value="1"/>
</dbReference>
<dbReference type="Gene3D" id="3.30.460.30">
    <property type="entry name" value="Glutamyl-tRNA reductase, N-terminal domain"/>
    <property type="match status" value="1"/>
</dbReference>
<dbReference type="Gene3D" id="3.40.50.720">
    <property type="entry name" value="NAD(P)-binding Rossmann-like Domain"/>
    <property type="match status" value="1"/>
</dbReference>
<dbReference type="HAMAP" id="MF_00087">
    <property type="entry name" value="Glu_tRNA_reductase"/>
    <property type="match status" value="1"/>
</dbReference>
<dbReference type="InterPro" id="IPR000343">
    <property type="entry name" value="4pyrrol_synth_GluRdtase"/>
</dbReference>
<dbReference type="InterPro" id="IPR015896">
    <property type="entry name" value="4pyrrol_synth_GluRdtase_dimer"/>
</dbReference>
<dbReference type="InterPro" id="IPR015895">
    <property type="entry name" value="4pyrrol_synth_GluRdtase_N"/>
</dbReference>
<dbReference type="InterPro" id="IPR018214">
    <property type="entry name" value="GluRdtase_CS"/>
</dbReference>
<dbReference type="InterPro" id="IPR036453">
    <property type="entry name" value="GluRdtase_dimer_dom_sf"/>
</dbReference>
<dbReference type="InterPro" id="IPR036343">
    <property type="entry name" value="GluRdtase_N_sf"/>
</dbReference>
<dbReference type="InterPro" id="IPR036291">
    <property type="entry name" value="NAD(P)-bd_dom_sf"/>
</dbReference>
<dbReference type="InterPro" id="IPR006151">
    <property type="entry name" value="Shikm_DH/Glu-tRNA_Rdtase"/>
</dbReference>
<dbReference type="NCBIfam" id="TIGR01035">
    <property type="entry name" value="hemA"/>
    <property type="match status" value="1"/>
</dbReference>
<dbReference type="NCBIfam" id="NF000744">
    <property type="entry name" value="PRK00045.1-3"/>
    <property type="match status" value="1"/>
</dbReference>
<dbReference type="PANTHER" id="PTHR43013">
    <property type="entry name" value="GLUTAMYL-TRNA REDUCTASE"/>
    <property type="match status" value="1"/>
</dbReference>
<dbReference type="PANTHER" id="PTHR43013:SF1">
    <property type="entry name" value="GLUTAMYL-TRNA REDUCTASE"/>
    <property type="match status" value="1"/>
</dbReference>
<dbReference type="Pfam" id="PF00745">
    <property type="entry name" value="GlutR_dimer"/>
    <property type="match status" value="1"/>
</dbReference>
<dbReference type="Pfam" id="PF05201">
    <property type="entry name" value="GlutR_N"/>
    <property type="match status" value="1"/>
</dbReference>
<dbReference type="Pfam" id="PF01488">
    <property type="entry name" value="Shikimate_DH"/>
    <property type="match status" value="1"/>
</dbReference>
<dbReference type="PIRSF" id="PIRSF000445">
    <property type="entry name" value="4pyrrol_synth_GluRdtase"/>
    <property type="match status" value="1"/>
</dbReference>
<dbReference type="SUPFAM" id="SSF69742">
    <property type="entry name" value="Glutamyl tRNA-reductase catalytic, N-terminal domain"/>
    <property type="match status" value="1"/>
</dbReference>
<dbReference type="SUPFAM" id="SSF69075">
    <property type="entry name" value="Glutamyl tRNA-reductase dimerization domain"/>
    <property type="match status" value="1"/>
</dbReference>
<dbReference type="SUPFAM" id="SSF51735">
    <property type="entry name" value="NAD(P)-binding Rossmann-fold domains"/>
    <property type="match status" value="1"/>
</dbReference>
<dbReference type="PROSITE" id="PS00747">
    <property type="entry name" value="GLUTR"/>
    <property type="match status" value="1"/>
</dbReference>
<accession>P16618</accession>
<keyword id="KW-0521">NADP</keyword>
<keyword id="KW-0560">Oxidoreductase</keyword>
<keyword id="KW-0627">Porphyrin biosynthesis</keyword>
<keyword id="KW-1185">Reference proteome</keyword>
<sequence>MHILVVGVDYKSAPIEIREKVSFQPNELAEAMVQLKEEKSILENIIVSTCNRTEIYAVVDQLHTGRYYIKKFLADWFQLSKEELSPFLTFYESDAAVEHLFRVACGLDSMVIGETQILGQVRDSFKTAQQEKTIGTIFNELFKQAVTVGKRTHAETDIGSNAVSVSYAAVELAKKIFGNLSSKHILILGAGKMGELAAENLHGQGIGKVTVINRTYLKAKELADRFSGEARSLNQLESALAEADILISSTGASEFVVSKEMMENANKLRKGRPLFMVDIAVPRDLDPALNDLEGVFLYDIDDLEGIVEANMKERRETAEKVELLIEETIVEFKQWMNTLGVVPVISALREKALAIQSETMDSIERKLPHLSTREKKLLNKHTKSIINQMLRDPILKVKELAADADSEEKLALFMQIFDIEEAAGRQMMKTVESSQKVHSFKKAESKAGFSPLVSE</sequence>